<proteinExistence type="inferred from homology"/>
<name>TRUA_SALA4</name>
<gene>
    <name evidence="1" type="primary">truA</name>
    <name type="ordered locus">SeAg_B2510</name>
</gene>
<organism>
    <name type="scientific">Salmonella agona (strain SL483)</name>
    <dbReference type="NCBI Taxonomy" id="454166"/>
    <lineage>
        <taxon>Bacteria</taxon>
        <taxon>Pseudomonadati</taxon>
        <taxon>Pseudomonadota</taxon>
        <taxon>Gammaproteobacteria</taxon>
        <taxon>Enterobacterales</taxon>
        <taxon>Enterobacteriaceae</taxon>
        <taxon>Salmonella</taxon>
    </lineage>
</organism>
<evidence type="ECO:0000255" key="1">
    <source>
        <dbReference type="HAMAP-Rule" id="MF_00171"/>
    </source>
</evidence>
<accession>B5EZQ2</accession>
<feature type="chain" id="PRO_1000097777" description="tRNA pseudouridine synthase A">
    <location>
        <begin position="1"/>
        <end position="270"/>
    </location>
</feature>
<feature type="active site" description="Nucleophile" evidence="1">
    <location>
        <position position="60"/>
    </location>
</feature>
<feature type="binding site" evidence="1">
    <location>
        <position position="118"/>
    </location>
    <ligand>
        <name>substrate</name>
    </ligand>
</feature>
<reference key="1">
    <citation type="journal article" date="2011" name="J. Bacteriol.">
        <title>Comparative genomics of 28 Salmonella enterica isolates: evidence for CRISPR-mediated adaptive sublineage evolution.</title>
        <authorList>
            <person name="Fricke W.F."/>
            <person name="Mammel M.K."/>
            <person name="McDermott P.F."/>
            <person name="Tartera C."/>
            <person name="White D.G."/>
            <person name="Leclerc J.E."/>
            <person name="Ravel J."/>
            <person name="Cebula T.A."/>
        </authorList>
    </citation>
    <scope>NUCLEOTIDE SEQUENCE [LARGE SCALE GENOMIC DNA]</scope>
    <source>
        <strain>SL483</strain>
    </source>
</reference>
<comment type="function">
    <text evidence="1">Formation of pseudouridine at positions 38, 39 and 40 in the anticodon stem and loop of transfer RNAs.</text>
</comment>
<comment type="catalytic activity">
    <reaction evidence="1">
        <text>uridine(38/39/40) in tRNA = pseudouridine(38/39/40) in tRNA</text>
        <dbReference type="Rhea" id="RHEA:22376"/>
        <dbReference type="Rhea" id="RHEA-COMP:10085"/>
        <dbReference type="Rhea" id="RHEA-COMP:10087"/>
        <dbReference type="ChEBI" id="CHEBI:65314"/>
        <dbReference type="ChEBI" id="CHEBI:65315"/>
        <dbReference type="EC" id="5.4.99.12"/>
    </reaction>
</comment>
<comment type="subunit">
    <text evidence="1">Homodimer.</text>
</comment>
<comment type="similarity">
    <text evidence="1">Belongs to the tRNA pseudouridine synthase TruA family.</text>
</comment>
<sequence>MSGQQSSPVYKIALGIEYDGSKYYGWQRQNEVRSVQEKLEKALSQVANEPINVFCAGRTDAGVHGTGQVVHFETTALRKDAAWTLGVNANLPGDIAVRWVKTVPDDFHARFSATARRYRYIIYNHRLRPAVLAKGVTHYYEPLDAERMHRAAQCLLGENDFTSFRAVQCQSRTPWRNVMHINVTRHGPYVVVDIKANAFVHHMVRNIVGSLLEVGAHNQPESWIAELLAARDRTLAAATAKAEGLYLVAVDYPDRFDLPKPPMGPLFLAD</sequence>
<protein>
    <recommendedName>
        <fullName evidence="1">tRNA pseudouridine synthase A</fullName>
        <ecNumber evidence="1">5.4.99.12</ecNumber>
    </recommendedName>
    <alternativeName>
        <fullName evidence="1">tRNA pseudouridine(38-40) synthase</fullName>
    </alternativeName>
    <alternativeName>
        <fullName evidence="1">tRNA pseudouridylate synthase I</fullName>
    </alternativeName>
    <alternativeName>
        <fullName evidence="1">tRNA-uridine isomerase I</fullName>
    </alternativeName>
</protein>
<keyword id="KW-0413">Isomerase</keyword>
<keyword id="KW-0819">tRNA processing</keyword>
<dbReference type="EC" id="5.4.99.12" evidence="1"/>
<dbReference type="EMBL" id="CP001138">
    <property type="protein sequence ID" value="ACH50053.1"/>
    <property type="molecule type" value="Genomic_DNA"/>
</dbReference>
<dbReference type="RefSeq" id="WP_000016631.1">
    <property type="nucleotide sequence ID" value="NC_011149.1"/>
</dbReference>
<dbReference type="SMR" id="B5EZQ2"/>
<dbReference type="KEGG" id="sea:SeAg_B2510"/>
<dbReference type="HOGENOM" id="CLU_014673_0_2_6"/>
<dbReference type="Proteomes" id="UP000008819">
    <property type="component" value="Chromosome"/>
</dbReference>
<dbReference type="GO" id="GO:0003723">
    <property type="term" value="F:RNA binding"/>
    <property type="evidence" value="ECO:0007669"/>
    <property type="project" value="InterPro"/>
</dbReference>
<dbReference type="GO" id="GO:0160147">
    <property type="term" value="F:tRNA pseudouridine(38-40) synthase activity"/>
    <property type="evidence" value="ECO:0007669"/>
    <property type="project" value="UniProtKB-EC"/>
</dbReference>
<dbReference type="GO" id="GO:0031119">
    <property type="term" value="P:tRNA pseudouridine synthesis"/>
    <property type="evidence" value="ECO:0007669"/>
    <property type="project" value="UniProtKB-UniRule"/>
</dbReference>
<dbReference type="CDD" id="cd02570">
    <property type="entry name" value="PseudoU_synth_EcTruA"/>
    <property type="match status" value="1"/>
</dbReference>
<dbReference type="FunFam" id="3.30.70.580:FF:000001">
    <property type="entry name" value="tRNA pseudouridine synthase A"/>
    <property type="match status" value="1"/>
</dbReference>
<dbReference type="FunFam" id="3.30.70.660:FF:000001">
    <property type="entry name" value="tRNA pseudouridine synthase A"/>
    <property type="match status" value="1"/>
</dbReference>
<dbReference type="Gene3D" id="3.30.70.660">
    <property type="entry name" value="Pseudouridine synthase I, catalytic domain, C-terminal subdomain"/>
    <property type="match status" value="1"/>
</dbReference>
<dbReference type="Gene3D" id="3.30.70.580">
    <property type="entry name" value="Pseudouridine synthase I, catalytic domain, N-terminal subdomain"/>
    <property type="match status" value="1"/>
</dbReference>
<dbReference type="HAMAP" id="MF_00171">
    <property type="entry name" value="TruA"/>
    <property type="match status" value="1"/>
</dbReference>
<dbReference type="InterPro" id="IPR020103">
    <property type="entry name" value="PsdUridine_synth_cat_dom_sf"/>
</dbReference>
<dbReference type="InterPro" id="IPR001406">
    <property type="entry name" value="PsdUridine_synth_TruA"/>
</dbReference>
<dbReference type="InterPro" id="IPR020097">
    <property type="entry name" value="PsdUridine_synth_TruA_a/b_dom"/>
</dbReference>
<dbReference type="InterPro" id="IPR020095">
    <property type="entry name" value="PsdUridine_synth_TruA_C"/>
</dbReference>
<dbReference type="InterPro" id="IPR020094">
    <property type="entry name" value="TruA/RsuA/RluB/E/F_N"/>
</dbReference>
<dbReference type="NCBIfam" id="TIGR00071">
    <property type="entry name" value="hisT_truA"/>
    <property type="match status" value="1"/>
</dbReference>
<dbReference type="PANTHER" id="PTHR11142">
    <property type="entry name" value="PSEUDOURIDYLATE SYNTHASE"/>
    <property type="match status" value="1"/>
</dbReference>
<dbReference type="PANTHER" id="PTHR11142:SF0">
    <property type="entry name" value="TRNA PSEUDOURIDINE SYNTHASE-LIKE 1"/>
    <property type="match status" value="1"/>
</dbReference>
<dbReference type="Pfam" id="PF01416">
    <property type="entry name" value="PseudoU_synth_1"/>
    <property type="match status" value="2"/>
</dbReference>
<dbReference type="PIRSF" id="PIRSF001430">
    <property type="entry name" value="tRNA_psdUrid_synth"/>
    <property type="match status" value="1"/>
</dbReference>
<dbReference type="SUPFAM" id="SSF55120">
    <property type="entry name" value="Pseudouridine synthase"/>
    <property type="match status" value="1"/>
</dbReference>